<organism>
    <name type="scientific">Phytoplasma australiense</name>
    <dbReference type="NCBI Taxonomy" id="59748"/>
    <lineage>
        <taxon>Bacteria</taxon>
        <taxon>Bacillati</taxon>
        <taxon>Mycoplasmatota</taxon>
        <taxon>Mollicutes</taxon>
        <taxon>Acholeplasmatales</taxon>
        <taxon>Acholeplasmataceae</taxon>
        <taxon>Candidatus Phytoplasma</taxon>
        <taxon>16SrXII (Stolbur group)</taxon>
    </lineage>
</organism>
<feature type="chain" id="PRO_0000387031" description="Ribosomal RNA small subunit methyltransferase H">
    <location>
        <begin position="1"/>
        <end position="303"/>
    </location>
</feature>
<feature type="binding site" evidence="1">
    <location>
        <begin position="33"/>
        <end position="35"/>
    </location>
    <ligand>
        <name>S-adenosyl-L-methionine</name>
        <dbReference type="ChEBI" id="CHEBI:59789"/>
    </ligand>
</feature>
<feature type="binding site" evidence="1">
    <location>
        <position position="52"/>
    </location>
    <ligand>
        <name>S-adenosyl-L-methionine</name>
        <dbReference type="ChEBI" id="CHEBI:59789"/>
    </ligand>
</feature>
<feature type="binding site" evidence="1">
    <location>
        <position position="78"/>
    </location>
    <ligand>
        <name>S-adenosyl-L-methionine</name>
        <dbReference type="ChEBI" id="CHEBI:59789"/>
    </ligand>
</feature>
<feature type="binding site" evidence="1">
    <location>
        <position position="99"/>
    </location>
    <ligand>
        <name>S-adenosyl-L-methionine</name>
        <dbReference type="ChEBI" id="CHEBI:59789"/>
    </ligand>
</feature>
<feature type="binding site" evidence="1">
    <location>
        <position position="106"/>
    </location>
    <ligand>
        <name>S-adenosyl-L-methionine</name>
        <dbReference type="ChEBI" id="CHEBI:59789"/>
    </ligand>
</feature>
<sequence>MTLRHISVLKEEAISFLNINPNGVYVDATLGQGGHTLSILNHLQDGFLYSFDQDLKACSDIQKKLNPNWPIEIIHSNFSNLKLELAKRNVFQLDGILFDLGISSCQIDDSQRGFSYLHNAPLDMRFDNRQKLTAQEIVNFYSFEKLKNIFHIYGEEKKAALIAKQIIKNRPLKTSYDLVAITDMFYKYHKGHSAKKIFQALRIEVNQELEVLKQALSQSLELLKKDGSIVVISFHSLEDRIVKHFFKKNSVFEFPKKLPIMSVDYPQPALRIITKKPCIPSEVEMKNNPRSISAKLRAAVKNI</sequence>
<reference key="1">
    <citation type="journal article" date="2008" name="J. Bacteriol.">
        <title>Comparative genome analysis of 'Candidatus Phytoplasma australiense' (subgroup tuf-Australia I; rp-A) and 'Ca. Phytoplasma asteris' strains OY-M and AY-WB.</title>
        <authorList>
            <person name="Tran-Nguyen L.T."/>
            <person name="Kube M."/>
            <person name="Schneider B."/>
            <person name="Reinhardt R."/>
            <person name="Gibb K.S."/>
        </authorList>
    </citation>
    <scope>NUCLEOTIDE SEQUENCE [LARGE SCALE GENOMIC DNA]</scope>
</reference>
<comment type="function">
    <text evidence="1">Specifically methylates the N4 position of cytidine in position 1402 (C1402) of 16S rRNA.</text>
</comment>
<comment type="catalytic activity">
    <reaction evidence="1">
        <text>cytidine(1402) in 16S rRNA + S-adenosyl-L-methionine = N(4)-methylcytidine(1402) in 16S rRNA + S-adenosyl-L-homocysteine + H(+)</text>
        <dbReference type="Rhea" id="RHEA:42928"/>
        <dbReference type="Rhea" id="RHEA-COMP:10286"/>
        <dbReference type="Rhea" id="RHEA-COMP:10287"/>
        <dbReference type="ChEBI" id="CHEBI:15378"/>
        <dbReference type="ChEBI" id="CHEBI:57856"/>
        <dbReference type="ChEBI" id="CHEBI:59789"/>
        <dbReference type="ChEBI" id="CHEBI:74506"/>
        <dbReference type="ChEBI" id="CHEBI:82748"/>
        <dbReference type="EC" id="2.1.1.199"/>
    </reaction>
</comment>
<comment type="subcellular location">
    <subcellularLocation>
        <location evidence="1">Cytoplasm</location>
    </subcellularLocation>
</comment>
<comment type="similarity">
    <text evidence="1">Belongs to the methyltransferase superfamily. RsmH family.</text>
</comment>
<dbReference type="EC" id="2.1.1.199" evidence="1"/>
<dbReference type="EMBL" id="AM422018">
    <property type="protein sequence ID" value="CAM11442.1"/>
    <property type="molecule type" value="Genomic_DNA"/>
</dbReference>
<dbReference type="SMR" id="B1V910"/>
<dbReference type="STRING" id="59748.PA0107"/>
<dbReference type="KEGG" id="pal:PA0107"/>
<dbReference type="eggNOG" id="COG0275">
    <property type="taxonomic scope" value="Bacteria"/>
</dbReference>
<dbReference type="Proteomes" id="UP000008323">
    <property type="component" value="Chromosome"/>
</dbReference>
<dbReference type="GO" id="GO:0005737">
    <property type="term" value="C:cytoplasm"/>
    <property type="evidence" value="ECO:0007669"/>
    <property type="project" value="UniProtKB-SubCell"/>
</dbReference>
<dbReference type="GO" id="GO:0071424">
    <property type="term" value="F:rRNA (cytosine-N4-)-methyltransferase activity"/>
    <property type="evidence" value="ECO:0007669"/>
    <property type="project" value="UniProtKB-UniRule"/>
</dbReference>
<dbReference type="GO" id="GO:0070475">
    <property type="term" value="P:rRNA base methylation"/>
    <property type="evidence" value="ECO:0007669"/>
    <property type="project" value="UniProtKB-UniRule"/>
</dbReference>
<dbReference type="Gene3D" id="1.10.150.170">
    <property type="entry name" value="Putative methyltransferase TM0872, insert domain"/>
    <property type="match status" value="1"/>
</dbReference>
<dbReference type="Gene3D" id="3.40.50.150">
    <property type="entry name" value="Vaccinia Virus protein VP39"/>
    <property type="match status" value="1"/>
</dbReference>
<dbReference type="HAMAP" id="MF_01007">
    <property type="entry name" value="16SrRNA_methyltr_H"/>
    <property type="match status" value="1"/>
</dbReference>
<dbReference type="InterPro" id="IPR002903">
    <property type="entry name" value="RsmH"/>
</dbReference>
<dbReference type="InterPro" id="IPR023397">
    <property type="entry name" value="SAM-dep_MeTrfase_MraW_recog"/>
</dbReference>
<dbReference type="InterPro" id="IPR029063">
    <property type="entry name" value="SAM-dependent_MTases_sf"/>
</dbReference>
<dbReference type="NCBIfam" id="TIGR00006">
    <property type="entry name" value="16S rRNA (cytosine(1402)-N(4))-methyltransferase RsmH"/>
    <property type="match status" value="1"/>
</dbReference>
<dbReference type="PANTHER" id="PTHR11265:SF0">
    <property type="entry name" value="12S RRNA N4-METHYLCYTIDINE METHYLTRANSFERASE"/>
    <property type="match status" value="1"/>
</dbReference>
<dbReference type="PANTHER" id="PTHR11265">
    <property type="entry name" value="S-ADENOSYL-METHYLTRANSFERASE MRAW"/>
    <property type="match status" value="1"/>
</dbReference>
<dbReference type="Pfam" id="PF01795">
    <property type="entry name" value="Methyltransf_5"/>
    <property type="match status" value="1"/>
</dbReference>
<dbReference type="PIRSF" id="PIRSF004486">
    <property type="entry name" value="MraW"/>
    <property type="match status" value="1"/>
</dbReference>
<dbReference type="SUPFAM" id="SSF81799">
    <property type="entry name" value="Putative methyltransferase TM0872, insert domain"/>
    <property type="match status" value="1"/>
</dbReference>
<dbReference type="SUPFAM" id="SSF53335">
    <property type="entry name" value="S-adenosyl-L-methionine-dependent methyltransferases"/>
    <property type="match status" value="1"/>
</dbReference>
<accession>B1V910</accession>
<evidence type="ECO:0000255" key="1">
    <source>
        <dbReference type="HAMAP-Rule" id="MF_01007"/>
    </source>
</evidence>
<gene>
    <name evidence="1" type="primary">rsmH</name>
    <name type="synonym">mraW</name>
    <name type="ordered locus">PA0107</name>
</gene>
<name>RSMH_PHYAS</name>
<keyword id="KW-0963">Cytoplasm</keyword>
<keyword id="KW-0489">Methyltransferase</keyword>
<keyword id="KW-1185">Reference proteome</keyword>
<keyword id="KW-0698">rRNA processing</keyword>
<keyword id="KW-0949">S-adenosyl-L-methionine</keyword>
<keyword id="KW-0808">Transferase</keyword>
<protein>
    <recommendedName>
        <fullName evidence="1">Ribosomal RNA small subunit methyltransferase H</fullName>
        <ecNumber evidence="1">2.1.1.199</ecNumber>
    </recommendedName>
    <alternativeName>
        <fullName evidence="1">16S rRNA m(4)C1402 methyltransferase</fullName>
    </alternativeName>
    <alternativeName>
        <fullName evidence="1">rRNA (cytosine-N(4)-)-methyltransferase RsmH</fullName>
    </alternativeName>
</protein>
<proteinExistence type="inferred from homology"/>